<keyword id="KW-1185">Reference proteome</keyword>
<keyword id="KW-0687">Ribonucleoprotein</keyword>
<keyword id="KW-0689">Ribosomal protein</keyword>
<keyword id="KW-0694">RNA-binding</keyword>
<keyword id="KW-0699">rRNA-binding</keyword>
<keyword id="KW-0820">tRNA-binding</keyword>
<protein>
    <recommendedName>
        <fullName evidence="1">Large ribosomal subunit protein uL16</fullName>
    </recommendedName>
    <alternativeName>
        <fullName evidence="2">50S ribosomal protein L16</fullName>
    </alternativeName>
</protein>
<gene>
    <name evidence="1" type="primary">rplP</name>
    <name type="ordered locus">Pden_0766</name>
</gene>
<comment type="function">
    <text evidence="1">Binds 23S rRNA and is also seen to make contacts with the A and possibly P site tRNAs.</text>
</comment>
<comment type="subunit">
    <text evidence="1">Part of the 50S ribosomal subunit.</text>
</comment>
<comment type="similarity">
    <text evidence="1">Belongs to the universal ribosomal protein uL16 family.</text>
</comment>
<sequence>MLQPKRTKFRKQHKGRIHGEAKGGFNLNFGSYALKAIEPERVTARQIEAARRAITRHMKRQGRVWIRIFPDVPVSSKPTEVRMGKGKGSVDYWAARVHPGRIMFEIDGVNDTIAREALRLGAQKLPVLTRIVAREDW</sequence>
<proteinExistence type="inferred from homology"/>
<reference key="1">
    <citation type="submission" date="2006-12" db="EMBL/GenBank/DDBJ databases">
        <title>Complete sequence of chromosome 1 of Paracoccus denitrificans PD1222.</title>
        <authorList>
            <person name="Copeland A."/>
            <person name="Lucas S."/>
            <person name="Lapidus A."/>
            <person name="Barry K."/>
            <person name="Detter J.C."/>
            <person name="Glavina del Rio T."/>
            <person name="Hammon N."/>
            <person name="Israni S."/>
            <person name="Dalin E."/>
            <person name="Tice H."/>
            <person name="Pitluck S."/>
            <person name="Munk A.C."/>
            <person name="Brettin T."/>
            <person name="Bruce D."/>
            <person name="Han C."/>
            <person name="Tapia R."/>
            <person name="Gilna P."/>
            <person name="Schmutz J."/>
            <person name="Larimer F."/>
            <person name="Land M."/>
            <person name="Hauser L."/>
            <person name="Kyrpides N."/>
            <person name="Lykidis A."/>
            <person name="Spiro S."/>
            <person name="Richardson D.J."/>
            <person name="Moir J.W.B."/>
            <person name="Ferguson S.J."/>
            <person name="van Spanning R.J.M."/>
            <person name="Richardson P."/>
        </authorList>
    </citation>
    <scope>NUCLEOTIDE SEQUENCE [LARGE SCALE GENOMIC DNA]</scope>
    <source>
        <strain>Pd 1222</strain>
    </source>
</reference>
<dbReference type="EMBL" id="CP000489">
    <property type="protein sequence ID" value="ABL68878.1"/>
    <property type="molecule type" value="Genomic_DNA"/>
</dbReference>
<dbReference type="RefSeq" id="WP_011747107.1">
    <property type="nucleotide sequence ID" value="NC_008686.1"/>
</dbReference>
<dbReference type="SMR" id="A1B034"/>
<dbReference type="STRING" id="318586.Pden_0766"/>
<dbReference type="EnsemblBacteria" id="ABL68878">
    <property type="protein sequence ID" value="ABL68878"/>
    <property type="gene ID" value="Pden_0766"/>
</dbReference>
<dbReference type="GeneID" id="93451990"/>
<dbReference type="KEGG" id="pde:Pden_0766"/>
<dbReference type="eggNOG" id="COG0197">
    <property type="taxonomic scope" value="Bacteria"/>
</dbReference>
<dbReference type="HOGENOM" id="CLU_078858_2_1_5"/>
<dbReference type="OrthoDB" id="9802589at2"/>
<dbReference type="Proteomes" id="UP000000361">
    <property type="component" value="Chromosome 1"/>
</dbReference>
<dbReference type="GO" id="GO:0022625">
    <property type="term" value="C:cytosolic large ribosomal subunit"/>
    <property type="evidence" value="ECO:0007669"/>
    <property type="project" value="TreeGrafter"/>
</dbReference>
<dbReference type="GO" id="GO:0019843">
    <property type="term" value="F:rRNA binding"/>
    <property type="evidence" value="ECO:0007669"/>
    <property type="project" value="UniProtKB-UniRule"/>
</dbReference>
<dbReference type="GO" id="GO:0003735">
    <property type="term" value="F:structural constituent of ribosome"/>
    <property type="evidence" value="ECO:0007669"/>
    <property type="project" value="InterPro"/>
</dbReference>
<dbReference type="GO" id="GO:0000049">
    <property type="term" value="F:tRNA binding"/>
    <property type="evidence" value="ECO:0007669"/>
    <property type="project" value="UniProtKB-KW"/>
</dbReference>
<dbReference type="GO" id="GO:0006412">
    <property type="term" value="P:translation"/>
    <property type="evidence" value="ECO:0007669"/>
    <property type="project" value="UniProtKB-UniRule"/>
</dbReference>
<dbReference type="CDD" id="cd01433">
    <property type="entry name" value="Ribosomal_L16_L10e"/>
    <property type="match status" value="1"/>
</dbReference>
<dbReference type="FunFam" id="3.90.1170.10:FF:000001">
    <property type="entry name" value="50S ribosomal protein L16"/>
    <property type="match status" value="1"/>
</dbReference>
<dbReference type="Gene3D" id="3.90.1170.10">
    <property type="entry name" value="Ribosomal protein L10e/L16"/>
    <property type="match status" value="1"/>
</dbReference>
<dbReference type="HAMAP" id="MF_01342">
    <property type="entry name" value="Ribosomal_uL16"/>
    <property type="match status" value="1"/>
</dbReference>
<dbReference type="InterPro" id="IPR047873">
    <property type="entry name" value="Ribosomal_uL16"/>
</dbReference>
<dbReference type="InterPro" id="IPR000114">
    <property type="entry name" value="Ribosomal_uL16_bact-type"/>
</dbReference>
<dbReference type="InterPro" id="IPR020798">
    <property type="entry name" value="Ribosomal_uL16_CS"/>
</dbReference>
<dbReference type="InterPro" id="IPR016180">
    <property type="entry name" value="Ribosomal_uL16_dom"/>
</dbReference>
<dbReference type="InterPro" id="IPR036920">
    <property type="entry name" value="Ribosomal_uL16_sf"/>
</dbReference>
<dbReference type="NCBIfam" id="TIGR01164">
    <property type="entry name" value="rplP_bact"/>
    <property type="match status" value="1"/>
</dbReference>
<dbReference type="PANTHER" id="PTHR12220">
    <property type="entry name" value="50S/60S RIBOSOMAL PROTEIN L16"/>
    <property type="match status" value="1"/>
</dbReference>
<dbReference type="PANTHER" id="PTHR12220:SF13">
    <property type="entry name" value="LARGE RIBOSOMAL SUBUNIT PROTEIN UL16M"/>
    <property type="match status" value="1"/>
</dbReference>
<dbReference type="Pfam" id="PF00252">
    <property type="entry name" value="Ribosomal_L16"/>
    <property type="match status" value="1"/>
</dbReference>
<dbReference type="PRINTS" id="PR00060">
    <property type="entry name" value="RIBOSOMALL16"/>
</dbReference>
<dbReference type="SUPFAM" id="SSF54686">
    <property type="entry name" value="Ribosomal protein L16p/L10e"/>
    <property type="match status" value="1"/>
</dbReference>
<dbReference type="PROSITE" id="PS00586">
    <property type="entry name" value="RIBOSOMAL_L16_1"/>
    <property type="match status" value="1"/>
</dbReference>
<dbReference type="PROSITE" id="PS00701">
    <property type="entry name" value="RIBOSOMAL_L16_2"/>
    <property type="match status" value="1"/>
</dbReference>
<accession>A1B034</accession>
<organism>
    <name type="scientific">Paracoccus denitrificans (strain Pd 1222)</name>
    <dbReference type="NCBI Taxonomy" id="318586"/>
    <lineage>
        <taxon>Bacteria</taxon>
        <taxon>Pseudomonadati</taxon>
        <taxon>Pseudomonadota</taxon>
        <taxon>Alphaproteobacteria</taxon>
        <taxon>Rhodobacterales</taxon>
        <taxon>Paracoccaceae</taxon>
        <taxon>Paracoccus</taxon>
    </lineage>
</organism>
<name>RL16_PARDP</name>
<evidence type="ECO:0000255" key="1">
    <source>
        <dbReference type="HAMAP-Rule" id="MF_01342"/>
    </source>
</evidence>
<evidence type="ECO:0000305" key="2"/>
<feature type="chain" id="PRO_1000054669" description="Large ribosomal subunit protein uL16">
    <location>
        <begin position="1"/>
        <end position="137"/>
    </location>
</feature>